<feature type="chain" id="PRO_1000078959" description="RNA pyrophosphohydrolase">
    <location>
        <begin position="1"/>
        <end position="156"/>
    </location>
</feature>
<feature type="domain" description="Nudix hydrolase" evidence="1">
    <location>
        <begin position="6"/>
        <end position="148"/>
    </location>
</feature>
<feature type="short sequence motif" description="Nudix box">
    <location>
        <begin position="43"/>
        <end position="64"/>
    </location>
</feature>
<comment type="function">
    <text evidence="1">Accelerates the degradation of transcripts by removing pyrophosphate from the 5'-end of triphosphorylated RNA, leading to a more labile monophosphorylated state that can stimulate subsequent ribonuclease cleavage.</text>
</comment>
<comment type="cofactor">
    <cofactor evidence="1">
        <name>a divalent metal cation</name>
        <dbReference type="ChEBI" id="CHEBI:60240"/>
    </cofactor>
</comment>
<comment type="similarity">
    <text evidence="1">Belongs to the Nudix hydrolase family. RppH subfamily.</text>
</comment>
<proteinExistence type="inferred from homology"/>
<reference key="1">
    <citation type="journal article" date="2005" name="PLoS Biol.">
        <title>Major structural differences and novel potential virulence mechanisms from the genomes of multiple Campylobacter species.</title>
        <authorList>
            <person name="Fouts D.E."/>
            <person name="Mongodin E.F."/>
            <person name="Mandrell R.E."/>
            <person name="Miller W.G."/>
            <person name="Rasko D.A."/>
            <person name="Ravel J."/>
            <person name="Brinkac L.M."/>
            <person name="DeBoy R.T."/>
            <person name="Parker C.T."/>
            <person name="Daugherty S.C."/>
            <person name="Dodson R.J."/>
            <person name="Durkin A.S."/>
            <person name="Madupu R."/>
            <person name="Sullivan S.A."/>
            <person name="Shetty J.U."/>
            <person name="Ayodeji M.A."/>
            <person name="Shvartsbeyn A."/>
            <person name="Schatz M.C."/>
            <person name="Badger J.H."/>
            <person name="Fraser C.M."/>
            <person name="Nelson K.E."/>
        </authorList>
    </citation>
    <scope>NUCLEOTIDE SEQUENCE [LARGE SCALE GENOMIC DNA]</scope>
    <source>
        <strain>RM1221</strain>
    </source>
</reference>
<protein>
    <recommendedName>
        <fullName evidence="1">RNA pyrophosphohydrolase</fullName>
        <ecNumber evidence="1">3.6.1.-</ecNumber>
    </recommendedName>
    <alternativeName>
        <fullName evidence="1">(Di)nucleoside polyphosphate hydrolase</fullName>
    </alternativeName>
</protein>
<accession>Q5HVI9</accession>
<dbReference type="EC" id="3.6.1.-" evidence="1"/>
<dbReference type="EMBL" id="CP000025">
    <property type="protein sequence ID" value="AAW35806.1"/>
    <property type="molecule type" value="Genomic_DNA"/>
</dbReference>
<dbReference type="RefSeq" id="WP_002854797.1">
    <property type="nucleotide sequence ID" value="NC_003912.7"/>
</dbReference>
<dbReference type="SMR" id="Q5HVI9"/>
<dbReference type="KEGG" id="cjr:CJE0684"/>
<dbReference type="HOGENOM" id="CLU_087195_3_0_7"/>
<dbReference type="GO" id="GO:0016462">
    <property type="term" value="F:pyrophosphatase activity"/>
    <property type="evidence" value="ECO:0007669"/>
    <property type="project" value="UniProtKB-ARBA"/>
</dbReference>
<dbReference type="CDD" id="cd03671">
    <property type="entry name" value="NUDIX_Ap4A_hydrolase_plant_like"/>
    <property type="match status" value="1"/>
</dbReference>
<dbReference type="Gene3D" id="3.90.79.10">
    <property type="entry name" value="Nucleoside Triphosphate Pyrophosphohydrolase"/>
    <property type="match status" value="1"/>
</dbReference>
<dbReference type="HAMAP" id="MF_00298">
    <property type="entry name" value="Nudix_RppH"/>
    <property type="match status" value="1"/>
</dbReference>
<dbReference type="InterPro" id="IPR020476">
    <property type="entry name" value="Nudix_hydrolase"/>
</dbReference>
<dbReference type="InterPro" id="IPR015797">
    <property type="entry name" value="NUDIX_hydrolase-like_dom_sf"/>
</dbReference>
<dbReference type="InterPro" id="IPR020084">
    <property type="entry name" value="NUDIX_hydrolase_CS"/>
</dbReference>
<dbReference type="InterPro" id="IPR000086">
    <property type="entry name" value="NUDIX_hydrolase_dom"/>
</dbReference>
<dbReference type="InterPro" id="IPR022927">
    <property type="entry name" value="RppH"/>
</dbReference>
<dbReference type="NCBIfam" id="NF001936">
    <property type="entry name" value="PRK00714.1-3"/>
    <property type="match status" value="1"/>
</dbReference>
<dbReference type="NCBIfam" id="NF001938">
    <property type="entry name" value="PRK00714.1-5"/>
    <property type="match status" value="1"/>
</dbReference>
<dbReference type="PANTHER" id="PTHR43736">
    <property type="entry name" value="ADP-RIBOSE PYROPHOSPHATASE"/>
    <property type="match status" value="1"/>
</dbReference>
<dbReference type="PANTHER" id="PTHR43736:SF1">
    <property type="entry name" value="DIHYDRONEOPTERIN TRIPHOSPHATE DIPHOSPHATASE"/>
    <property type="match status" value="1"/>
</dbReference>
<dbReference type="Pfam" id="PF00293">
    <property type="entry name" value="NUDIX"/>
    <property type="match status" value="1"/>
</dbReference>
<dbReference type="PRINTS" id="PR00502">
    <property type="entry name" value="NUDIXFAMILY"/>
</dbReference>
<dbReference type="SUPFAM" id="SSF55811">
    <property type="entry name" value="Nudix"/>
    <property type="match status" value="1"/>
</dbReference>
<dbReference type="PROSITE" id="PS51462">
    <property type="entry name" value="NUDIX"/>
    <property type="match status" value="1"/>
</dbReference>
<dbReference type="PROSITE" id="PS00893">
    <property type="entry name" value="NUDIX_BOX"/>
    <property type="match status" value="1"/>
</dbReference>
<gene>
    <name evidence="1" type="primary">rppH</name>
    <name evidence="1" type="synonym">nudH</name>
    <name type="ordered locus">CJE0684</name>
</gene>
<organism>
    <name type="scientific">Campylobacter jejuni (strain RM1221)</name>
    <dbReference type="NCBI Taxonomy" id="195099"/>
    <lineage>
        <taxon>Bacteria</taxon>
        <taxon>Pseudomonadati</taxon>
        <taxon>Campylobacterota</taxon>
        <taxon>Epsilonproteobacteria</taxon>
        <taxon>Campylobacterales</taxon>
        <taxon>Campylobacteraceae</taxon>
        <taxon>Campylobacter</taxon>
    </lineage>
</organism>
<keyword id="KW-0378">Hydrolase</keyword>
<sequence>MENEKNYRPNVAAIVLSSSYPFECKIFIAKRSDMDNIWQFPQGGIDKGESVKNALFRELKEEIGTDEVEIIAEYPEWLSYDFPSKIVKKMYPYDGQIQKYFLVRLKHGATININTKHPEFDDYQFVSVKQIFEMINHFKKNIYVKVIKYFEEKGYI</sequence>
<evidence type="ECO:0000255" key="1">
    <source>
        <dbReference type="HAMAP-Rule" id="MF_00298"/>
    </source>
</evidence>
<name>RPPH_CAMJR</name>